<keyword id="KW-1017">Isopeptide bond</keyword>
<keyword id="KW-1185">Reference proteome</keyword>
<keyword id="KW-0833">Ubl conjugation pathway</keyword>
<accession>B4JVK9</accession>
<feature type="chain" id="PRO_0000392001" description="Ubiquitin-fold modifier 1">
    <location>
        <begin position="1"/>
        <end position="83"/>
    </location>
</feature>
<feature type="propeptide" id="PRO_0000392002" description="Removed in mature form" evidence="1">
    <location>
        <position position="84"/>
    </location>
</feature>
<feature type="cross-link" description="Glycyl lysine isopeptide (Gly-Lys) (interchain with K-? in acceptor proteins)" evidence="2">
    <location>
        <position position="83"/>
    </location>
</feature>
<proteinExistence type="inferred from homology"/>
<protein>
    <recommendedName>
        <fullName>Ubiquitin-fold modifier 1</fullName>
    </recommendedName>
</protein>
<gene>
    <name type="ORF">GH22653</name>
</gene>
<comment type="function">
    <text evidence="1">Ubiquitin-like modifier protein which binds to a number of as yet unidentified target proteins.</text>
</comment>
<comment type="similarity">
    <text evidence="3">Belongs to the UFM1 family.</text>
</comment>
<reference key="1">
    <citation type="journal article" date="2007" name="Nature">
        <title>Evolution of genes and genomes on the Drosophila phylogeny.</title>
        <authorList>
            <consortium name="Drosophila 12 genomes consortium"/>
        </authorList>
    </citation>
    <scope>NUCLEOTIDE SEQUENCE [LARGE SCALE GENOMIC DNA]</scope>
    <source>
        <strain>Tucson 15287-2541.00</strain>
    </source>
</reference>
<evidence type="ECO:0000250" key="1"/>
<evidence type="ECO:0000255" key="2"/>
<evidence type="ECO:0000305" key="3"/>
<dbReference type="EMBL" id="CH916375">
    <property type="protein sequence ID" value="EDV98477.1"/>
    <property type="molecule type" value="Genomic_DNA"/>
</dbReference>
<dbReference type="SMR" id="B4JVK9"/>
<dbReference type="FunCoup" id="B4JVK9">
    <property type="interactions" value="1030"/>
</dbReference>
<dbReference type="STRING" id="7222.B4JVK9"/>
<dbReference type="EnsemblMetazoa" id="FBtr0158067">
    <property type="protein sequence ID" value="FBpp0156559"/>
    <property type="gene ID" value="FBgn0130111"/>
</dbReference>
<dbReference type="EnsemblMetazoa" id="XM_001995369.2">
    <property type="protein sequence ID" value="XP_001995405.1"/>
    <property type="gene ID" value="LOC6568894"/>
</dbReference>
<dbReference type="GeneID" id="6568894"/>
<dbReference type="KEGG" id="dgr:6568894"/>
<dbReference type="CTD" id="51569"/>
<dbReference type="eggNOG" id="KOG3483">
    <property type="taxonomic scope" value="Eukaryota"/>
</dbReference>
<dbReference type="HOGENOM" id="CLU_175114_0_0_1"/>
<dbReference type="InParanoid" id="B4JVK9"/>
<dbReference type="OMA" id="MEHAVGK"/>
<dbReference type="OrthoDB" id="284357at2759"/>
<dbReference type="PhylomeDB" id="B4JVK9"/>
<dbReference type="Proteomes" id="UP000001070">
    <property type="component" value="Unassembled WGS sequence"/>
</dbReference>
<dbReference type="GO" id="GO:0005829">
    <property type="term" value="C:cytosol"/>
    <property type="evidence" value="ECO:0007669"/>
    <property type="project" value="EnsemblMetazoa"/>
</dbReference>
<dbReference type="GO" id="GO:0005634">
    <property type="term" value="C:nucleus"/>
    <property type="evidence" value="ECO:0007669"/>
    <property type="project" value="TreeGrafter"/>
</dbReference>
<dbReference type="GO" id="GO:0031386">
    <property type="term" value="F:protein tag activity"/>
    <property type="evidence" value="ECO:0007669"/>
    <property type="project" value="EnsemblMetazoa"/>
</dbReference>
<dbReference type="GO" id="GO:0050905">
    <property type="term" value="P:neuromuscular process"/>
    <property type="evidence" value="ECO:0007669"/>
    <property type="project" value="EnsemblMetazoa"/>
</dbReference>
<dbReference type="GO" id="GO:1990592">
    <property type="term" value="P:protein K69-linked ufmylation"/>
    <property type="evidence" value="ECO:0007669"/>
    <property type="project" value="TreeGrafter"/>
</dbReference>
<dbReference type="CDD" id="cd01766">
    <property type="entry name" value="Ubl_UFM1"/>
    <property type="match status" value="1"/>
</dbReference>
<dbReference type="FunFam" id="3.10.20.90:FF:000044">
    <property type="entry name" value="Ubiquitin-fold modifier 1"/>
    <property type="match status" value="1"/>
</dbReference>
<dbReference type="Gene3D" id="3.10.20.90">
    <property type="entry name" value="Phosphatidylinositol 3-kinase Catalytic Subunit, Chain A, domain 1"/>
    <property type="match status" value="1"/>
</dbReference>
<dbReference type="InterPro" id="IPR029071">
    <property type="entry name" value="Ubiquitin-like_domsf"/>
</dbReference>
<dbReference type="InterPro" id="IPR005375">
    <property type="entry name" value="UFM1"/>
</dbReference>
<dbReference type="PANTHER" id="PTHR15825">
    <property type="entry name" value="UBIQUITIN-FOLD MODIFIER 1"/>
    <property type="match status" value="1"/>
</dbReference>
<dbReference type="PANTHER" id="PTHR15825:SF0">
    <property type="entry name" value="UBIQUITIN-FOLD MODIFIER 1"/>
    <property type="match status" value="1"/>
</dbReference>
<dbReference type="Pfam" id="PF03671">
    <property type="entry name" value="Ufm1"/>
    <property type="match status" value="1"/>
</dbReference>
<dbReference type="PIRSF" id="PIRSF038027">
    <property type="entry name" value="Ubiquitin-like_Ufm1"/>
    <property type="match status" value="1"/>
</dbReference>
<dbReference type="SUPFAM" id="SSF54236">
    <property type="entry name" value="Ubiquitin-like"/>
    <property type="match status" value="1"/>
</dbReference>
<sequence length="84" mass="9150">MSKVTFKITLTSDPKLPFKVLSVPEATPFTAVLKFASEEFKVPPETSAIITDDGIGISPQQTAGNVFLKHGSELRLIPRDRVGH</sequence>
<organism>
    <name type="scientific">Drosophila grimshawi</name>
    <name type="common">Hawaiian fruit fly</name>
    <name type="synonym">Idiomyia grimshawi</name>
    <dbReference type="NCBI Taxonomy" id="7222"/>
    <lineage>
        <taxon>Eukaryota</taxon>
        <taxon>Metazoa</taxon>
        <taxon>Ecdysozoa</taxon>
        <taxon>Arthropoda</taxon>
        <taxon>Hexapoda</taxon>
        <taxon>Insecta</taxon>
        <taxon>Pterygota</taxon>
        <taxon>Neoptera</taxon>
        <taxon>Endopterygota</taxon>
        <taxon>Diptera</taxon>
        <taxon>Brachycera</taxon>
        <taxon>Muscomorpha</taxon>
        <taxon>Ephydroidea</taxon>
        <taxon>Drosophilidae</taxon>
        <taxon>Drosophila</taxon>
        <taxon>Hawaiian Drosophila</taxon>
    </lineage>
</organism>
<name>UFM1_DROGR</name>